<reference key="1">
    <citation type="journal article" date="2001" name="Proc. Natl. Acad. Sci. U.S.A.">
        <title>Nucleotide sequence and predicted functions of the entire Sinorhizobium meliloti pSymA megaplasmid.</title>
        <authorList>
            <person name="Barnett M.J."/>
            <person name="Fisher R.F."/>
            <person name="Jones T."/>
            <person name="Komp C."/>
            <person name="Abola A.P."/>
            <person name="Barloy-Hubler F."/>
            <person name="Bowser L."/>
            <person name="Capela D."/>
            <person name="Galibert F."/>
            <person name="Gouzy J."/>
            <person name="Gurjal M."/>
            <person name="Hong A."/>
            <person name="Huizar L."/>
            <person name="Hyman R.W."/>
            <person name="Kahn D."/>
            <person name="Kahn M.L."/>
            <person name="Kalman S."/>
            <person name="Keating D.H."/>
            <person name="Palm C."/>
            <person name="Peck M.C."/>
            <person name="Surzycki R."/>
            <person name="Wells D.H."/>
            <person name="Yeh K.-C."/>
            <person name="Davis R.W."/>
            <person name="Federspiel N.A."/>
            <person name="Long S.R."/>
        </authorList>
    </citation>
    <scope>NUCLEOTIDE SEQUENCE [LARGE SCALE GENOMIC DNA]</scope>
    <source>
        <strain>1021</strain>
    </source>
</reference>
<reference key="2">
    <citation type="journal article" date="2001" name="Science">
        <title>The composite genome of the legume symbiont Sinorhizobium meliloti.</title>
        <authorList>
            <person name="Galibert F."/>
            <person name="Finan T.M."/>
            <person name="Long S.R."/>
            <person name="Puehler A."/>
            <person name="Abola P."/>
            <person name="Ampe F."/>
            <person name="Barloy-Hubler F."/>
            <person name="Barnett M.J."/>
            <person name="Becker A."/>
            <person name="Boistard P."/>
            <person name="Bothe G."/>
            <person name="Boutry M."/>
            <person name="Bowser L."/>
            <person name="Buhrmester J."/>
            <person name="Cadieu E."/>
            <person name="Capela D."/>
            <person name="Chain P."/>
            <person name="Cowie A."/>
            <person name="Davis R.W."/>
            <person name="Dreano S."/>
            <person name="Federspiel N.A."/>
            <person name="Fisher R.F."/>
            <person name="Gloux S."/>
            <person name="Godrie T."/>
            <person name="Goffeau A."/>
            <person name="Golding B."/>
            <person name="Gouzy J."/>
            <person name="Gurjal M."/>
            <person name="Hernandez-Lucas I."/>
            <person name="Hong A."/>
            <person name="Huizar L."/>
            <person name="Hyman R.W."/>
            <person name="Jones T."/>
            <person name="Kahn D."/>
            <person name="Kahn M.L."/>
            <person name="Kalman S."/>
            <person name="Keating D.H."/>
            <person name="Kiss E."/>
            <person name="Komp C."/>
            <person name="Lelaure V."/>
            <person name="Masuy D."/>
            <person name="Palm C."/>
            <person name="Peck M.C."/>
            <person name="Pohl T.M."/>
            <person name="Portetelle D."/>
            <person name="Purnelle B."/>
            <person name="Ramsperger U."/>
            <person name="Surzycki R."/>
            <person name="Thebault P."/>
            <person name="Vandenbol M."/>
            <person name="Vorhoelter F.J."/>
            <person name="Weidner S."/>
            <person name="Wells D.H."/>
            <person name="Wong K."/>
            <person name="Yeh K.-C."/>
            <person name="Batut J."/>
        </authorList>
    </citation>
    <scope>NUCLEOTIDE SEQUENCE [LARGE SCALE GENOMIC DNA]</scope>
    <source>
        <strain>1021</strain>
    </source>
</reference>
<feature type="chain" id="PRO_0000185131" description="Carbamate kinase">
    <location>
        <begin position="1"/>
        <end position="324"/>
    </location>
</feature>
<geneLocation type="plasmid">
    <name>pSymA</name>
    <name>megaplasmid 1</name>
</geneLocation>
<protein>
    <recommendedName>
        <fullName evidence="1">Carbamate kinase</fullName>
        <ecNumber evidence="1">2.7.2.2</ecNumber>
    </recommendedName>
</protein>
<gene>
    <name evidence="3" type="primary">arcC</name>
    <name type="ordered locus">RA0369</name>
    <name evidence="3" type="ORF">SMa0697</name>
</gene>
<keyword id="KW-0056">Arginine metabolism</keyword>
<keyword id="KW-0067">ATP-binding</keyword>
<keyword id="KW-0963">Cytoplasm</keyword>
<keyword id="KW-0418">Kinase</keyword>
<keyword id="KW-0547">Nucleotide-binding</keyword>
<keyword id="KW-0614">Plasmid</keyword>
<keyword id="KW-1185">Reference proteome</keyword>
<keyword id="KW-0808">Transferase</keyword>
<evidence type="ECO:0000250" key="1">
    <source>
        <dbReference type="UniProtKB" id="P13982"/>
    </source>
</evidence>
<evidence type="ECO:0000305" key="2"/>
<evidence type="ECO:0000312" key="3">
    <source>
        <dbReference type="EMBL" id="AAK65027.1"/>
    </source>
</evidence>
<comment type="catalytic activity">
    <reaction evidence="1">
        <text>hydrogencarbonate + NH4(+) + ATP = carbamoyl phosphate + ADP + H2O + H(+)</text>
        <dbReference type="Rhea" id="RHEA:10152"/>
        <dbReference type="ChEBI" id="CHEBI:15377"/>
        <dbReference type="ChEBI" id="CHEBI:15378"/>
        <dbReference type="ChEBI" id="CHEBI:17544"/>
        <dbReference type="ChEBI" id="CHEBI:28938"/>
        <dbReference type="ChEBI" id="CHEBI:30616"/>
        <dbReference type="ChEBI" id="CHEBI:58228"/>
        <dbReference type="ChEBI" id="CHEBI:456216"/>
        <dbReference type="EC" id="2.7.2.2"/>
    </reaction>
</comment>
<comment type="pathway">
    <text evidence="1">Amino-acid degradation; L-arginine degradation via ADI pathway.</text>
</comment>
<comment type="subcellular location">
    <subcellularLocation>
        <location evidence="2">Cytoplasm</location>
    </subcellularLocation>
</comment>
<comment type="similarity">
    <text evidence="2">Belongs to the carbamate kinase family.</text>
</comment>
<dbReference type="EC" id="2.7.2.2" evidence="1"/>
<dbReference type="EMBL" id="AE006469">
    <property type="protein sequence ID" value="AAK65027.1"/>
    <property type="molecule type" value="Genomic_DNA"/>
</dbReference>
<dbReference type="PIR" id="A95308">
    <property type="entry name" value="A95308"/>
</dbReference>
<dbReference type="RefSeq" id="NP_435615.1">
    <property type="nucleotide sequence ID" value="NC_003037.1"/>
</dbReference>
<dbReference type="RefSeq" id="WP_010967361.1">
    <property type="nucleotide sequence ID" value="NC_003037.1"/>
</dbReference>
<dbReference type="SMR" id="Q92ZT0"/>
<dbReference type="EnsemblBacteria" id="AAK65027">
    <property type="protein sequence ID" value="AAK65027"/>
    <property type="gene ID" value="SMa0697"/>
</dbReference>
<dbReference type="KEGG" id="sme:SMa0697"/>
<dbReference type="PATRIC" id="fig|266834.11.peg.385"/>
<dbReference type="HOGENOM" id="CLU_076278_0_1_5"/>
<dbReference type="OrthoDB" id="9766717at2"/>
<dbReference type="UniPathway" id="UPA00254"/>
<dbReference type="Proteomes" id="UP000001976">
    <property type="component" value="Plasmid pSymA"/>
</dbReference>
<dbReference type="GO" id="GO:0005829">
    <property type="term" value="C:cytosol"/>
    <property type="evidence" value="ECO:0007669"/>
    <property type="project" value="TreeGrafter"/>
</dbReference>
<dbReference type="GO" id="GO:0005524">
    <property type="term" value="F:ATP binding"/>
    <property type="evidence" value="ECO:0007669"/>
    <property type="project" value="UniProtKB-KW"/>
</dbReference>
<dbReference type="GO" id="GO:0008804">
    <property type="term" value="F:carbamate kinase activity"/>
    <property type="evidence" value="ECO:0007669"/>
    <property type="project" value="UniProtKB-EC"/>
</dbReference>
<dbReference type="GO" id="GO:0019546">
    <property type="term" value="P:arginine deiminase pathway"/>
    <property type="evidence" value="ECO:0007669"/>
    <property type="project" value="TreeGrafter"/>
</dbReference>
<dbReference type="CDD" id="cd04235">
    <property type="entry name" value="AAK_CK"/>
    <property type="match status" value="1"/>
</dbReference>
<dbReference type="FunFam" id="3.40.1160.10:FF:000007">
    <property type="entry name" value="Carbamate kinase"/>
    <property type="match status" value="1"/>
</dbReference>
<dbReference type="Gene3D" id="3.40.1160.10">
    <property type="entry name" value="Acetylglutamate kinase-like"/>
    <property type="match status" value="1"/>
</dbReference>
<dbReference type="InterPro" id="IPR036393">
    <property type="entry name" value="AceGlu_kinase-like_sf"/>
</dbReference>
<dbReference type="InterPro" id="IPR001048">
    <property type="entry name" value="Asp/Glu/Uridylate_kinase"/>
</dbReference>
<dbReference type="InterPro" id="IPR003964">
    <property type="entry name" value="Carb_kinase"/>
</dbReference>
<dbReference type="NCBIfam" id="TIGR00746">
    <property type="entry name" value="arcC"/>
    <property type="match status" value="1"/>
</dbReference>
<dbReference type="NCBIfam" id="NF009008">
    <property type="entry name" value="PRK12354.1"/>
    <property type="match status" value="1"/>
</dbReference>
<dbReference type="PANTHER" id="PTHR30409">
    <property type="entry name" value="CARBAMATE KINASE"/>
    <property type="match status" value="1"/>
</dbReference>
<dbReference type="PANTHER" id="PTHR30409:SF1">
    <property type="entry name" value="CARBAMATE KINASE-RELATED"/>
    <property type="match status" value="1"/>
</dbReference>
<dbReference type="Pfam" id="PF00696">
    <property type="entry name" value="AA_kinase"/>
    <property type="match status" value="1"/>
</dbReference>
<dbReference type="PIRSF" id="PIRSF000723">
    <property type="entry name" value="Carbamate_kin"/>
    <property type="match status" value="1"/>
</dbReference>
<dbReference type="PRINTS" id="PR01469">
    <property type="entry name" value="CARBMTKINASE"/>
</dbReference>
<dbReference type="SUPFAM" id="SSF53633">
    <property type="entry name" value="Carbamate kinase-like"/>
    <property type="match status" value="1"/>
</dbReference>
<proteinExistence type="inferred from homology"/>
<name>ARCC_RHIME</name>
<accession>Q92ZT0</accession>
<organism>
    <name type="scientific">Rhizobium meliloti (strain 1021)</name>
    <name type="common">Ensifer meliloti</name>
    <name type="synonym">Sinorhizobium meliloti</name>
    <dbReference type="NCBI Taxonomy" id="266834"/>
    <lineage>
        <taxon>Bacteria</taxon>
        <taxon>Pseudomonadati</taxon>
        <taxon>Pseudomonadota</taxon>
        <taxon>Alphaproteobacteria</taxon>
        <taxon>Hyphomicrobiales</taxon>
        <taxon>Rhizobiaceae</taxon>
        <taxon>Sinorhizobium/Ensifer group</taxon>
        <taxon>Sinorhizobium</taxon>
    </lineage>
</organism>
<sequence>MRVVIALGGNALLKRGEPMTAEVQRQNIKIAAEAIAPIAAEHQIVVTHGNGPQVGLLALQGSAYKPEEAYPLDILGAETEGMIGYMLEQELGNVLPFEVPLATILTMVEVDGNDPGFQNPTKFVGPVYDASEAGELHQQKGWVFKQDGNKWRRVVASPIPRRIFELRPIQWLLDKGAVVICAGGGGIPTMYERGKERTLIGVEAVIDKDLCSALLARDIEADLLILATDAEAVFTGWGTPERKAIFKTNPRRLGEFSFPAGSMGPKVEAACHFVNATGRVAAIGALADIPAMVRAERGTIISSSFSDITWHVEVPIPGPASRPV</sequence>